<comment type="function">
    <text evidence="1">Trims short 3' overhangs of a variety of RNA species, leaving a one or two nucleotide 3' overhang. Responsible for the end-turnover of tRNA: specifically removes the terminal AMP residue from uncharged tRNA (tRNA-C-C-A). Also appears to be involved in tRNA biosynthesis.</text>
</comment>
<comment type="cofactor">
    <cofactor evidence="1">
        <name>Mg(2+)</name>
        <dbReference type="ChEBI" id="CHEBI:18420"/>
    </cofactor>
    <text evidence="1">Binds two Mg(2+) per subunit. The active form of the enzyme binds two Mg(2+) ions in its active site. The first Mg(2+) forms only one salt bridge with the protein.</text>
</comment>
<comment type="subunit">
    <text evidence="1">Homodimer.</text>
</comment>
<comment type="similarity">
    <text evidence="1">Belongs to the RNase T family.</text>
</comment>
<gene>
    <name evidence="1" type="primary">rnt</name>
    <name type="ordered locus">PP_1085</name>
</gene>
<protein>
    <recommendedName>
        <fullName evidence="1">Ribonuclease T</fullName>
        <ecNumber evidence="1">3.1.13.-</ecNumber>
    </recommendedName>
    <alternativeName>
        <fullName evidence="1">Exoribonuclease T</fullName>
        <shortName evidence="1">RNase T</shortName>
    </alternativeName>
</protein>
<name>RNT_PSEPK</name>
<dbReference type="EC" id="3.1.13.-" evidence="1"/>
<dbReference type="EMBL" id="AE015451">
    <property type="protein sequence ID" value="AAN66710.1"/>
    <property type="molecule type" value="Genomic_DNA"/>
</dbReference>
<dbReference type="RefSeq" id="NP_743246.2">
    <property type="nucleotide sequence ID" value="NC_002947.4"/>
</dbReference>
<dbReference type="SMR" id="Q88NW8"/>
<dbReference type="STRING" id="160488.PP_1085"/>
<dbReference type="PaxDb" id="160488-PP_1085"/>
<dbReference type="KEGG" id="ppu:PP_1085"/>
<dbReference type="PATRIC" id="fig|160488.4.peg.1150"/>
<dbReference type="eggNOG" id="COG0847">
    <property type="taxonomic scope" value="Bacteria"/>
</dbReference>
<dbReference type="HOGENOM" id="CLU_082724_0_0_6"/>
<dbReference type="OrthoDB" id="9778264at2"/>
<dbReference type="PhylomeDB" id="Q88NW8"/>
<dbReference type="Proteomes" id="UP000000556">
    <property type="component" value="Chromosome"/>
</dbReference>
<dbReference type="GO" id="GO:0005829">
    <property type="term" value="C:cytosol"/>
    <property type="evidence" value="ECO:0007669"/>
    <property type="project" value="TreeGrafter"/>
</dbReference>
<dbReference type="GO" id="GO:0008408">
    <property type="term" value="F:3'-5' exonuclease activity"/>
    <property type="evidence" value="ECO:0007669"/>
    <property type="project" value="TreeGrafter"/>
</dbReference>
<dbReference type="GO" id="GO:0000287">
    <property type="term" value="F:magnesium ion binding"/>
    <property type="evidence" value="ECO:0007669"/>
    <property type="project" value="UniProtKB-UniRule"/>
</dbReference>
<dbReference type="GO" id="GO:0003676">
    <property type="term" value="F:nucleic acid binding"/>
    <property type="evidence" value="ECO:0007669"/>
    <property type="project" value="InterPro"/>
</dbReference>
<dbReference type="GO" id="GO:0016896">
    <property type="term" value="F:RNA exonuclease activity, producing 5'-phosphomonoesters"/>
    <property type="evidence" value="ECO:0007669"/>
    <property type="project" value="UniProtKB-UniRule"/>
</dbReference>
<dbReference type="GO" id="GO:0045004">
    <property type="term" value="P:DNA replication proofreading"/>
    <property type="evidence" value="ECO:0007669"/>
    <property type="project" value="TreeGrafter"/>
</dbReference>
<dbReference type="GO" id="GO:0008033">
    <property type="term" value="P:tRNA processing"/>
    <property type="evidence" value="ECO:0007669"/>
    <property type="project" value="UniProtKB-KW"/>
</dbReference>
<dbReference type="CDD" id="cd06134">
    <property type="entry name" value="RNaseT"/>
    <property type="match status" value="1"/>
</dbReference>
<dbReference type="FunFam" id="3.30.420.10:FF:000009">
    <property type="entry name" value="Ribonuclease T"/>
    <property type="match status" value="1"/>
</dbReference>
<dbReference type="Gene3D" id="3.30.420.10">
    <property type="entry name" value="Ribonuclease H-like superfamily/Ribonuclease H"/>
    <property type="match status" value="1"/>
</dbReference>
<dbReference type="HAMAP" id="MF_00157">
    <property type="entry name" value="RNase_T"/>
    <property type="match status" value="1"/>
</dbReference>
<dbReference type="InterPro" id="IPR013520">
    <property type="entry name" value="Exonuclease_RNaseT/DNA_pol3"/>
</dbReference>
<dbReference type="InterPro" id="IPR005987">
    <property type="entry name" value="RNase_T"/>
</dbReference>
<dbReference type="InterPro" id="IPR012337">
    <property type="entry name" value="RNaseH-like_sf"/>
</dbReference>
<dbReference type="InterPro" id="IPR036397">
    <property type="entry name" value="RNaseH_sf"/>
</dbReference>
<dbReference type="NCBIfam" id="TIGR01298">
    <property type="entry name" value="RNaseT"/>
    <property type="match status" value="1"/>
</dbReference>
<dbReference type="PANTHER" id="PTHR30231">
    <property type="entry name" value="DNA POLYMERASE III SUBUNIT EPSILON"/>
    <property type="match status" value="1"/>
</dbReference>
<dbReference type="PANTHER" id="PTHR30231:SF2">
    <property type="entry name" value="RIBONUCLEASE T"/>
    <property type="match status" value="1"/>
</dbReference>
<dbReference type="Pfam" id="PF00929">
    <property type="entry name" value="RNase_T"/>
    <property type="match status" value="1"/>
</dbReference>
<dbReference type="SMART" id="SM00479">
    <property type="entry name" value="EXOIII"/>
    <property type="match status" value="1"/>
</dbReference>
<dbReference type="SUPFAM" id="SSF53098">
    <property type="entry name" value="Ribonuclease H-like"/>
    <property type="match status" value="1"/>
</dbReference>
<organism>
    <name type="scientific">Pseudomonas putida (strain ATCC 47054 / DSM 6125 / CFBP 8728 / NCIMB 11950 / KT2440)</name>
    <dbReference type="NCBI Taxonomy" id="160488"/>
    <lineage>
        <taxon>Bacteria</taxon>
        <taxon>Pseudomonadati</taxon>
        <taxon>Pseudomonadota</taxon>
        <taxon>Gammaproteobacteria</taxon>
        <taxon>Pseudomonadales</taxon>
        <taxon>Pseudomonadaceae</taxon>
        <taxon>Pseudomonas</taxon>
    </lineage>
</organism>
<reference key="1">
    <citation type="journal article" date="2002" name="Environ. Microbiol.">
        <title>Complete genome sequence and comparative analysis of the metabolically versatile Pseudomonas putida KT2440.</title>
        <authorList>
            <person name="Nelson K.E."/>
            <person name="Weinel C."/>
            <person name="Paulsen I.T."/>
            <person name="Dodson R.J."/>
            <person name="Hilbert H."/>
            <person name="Martins dos Santos V.A.P."/>
            <person name="Fouts D.E."/>
            <person name="Gill S.R."/>
            <person name="Pop M."/>
            <person name="Holmes M."/>
            <person name="Brinkac L.M."/>
            <person name="Beanan M.J."/>
            <person name="DeBoy R.T."/>
            <person name="Daugherty S.C."/>
            <person name="Kolonay J.F."/>
            <person name="Madupu R."/>
            <person name="Nelson W.C."/>
            <person name="White O."/>
            <person name="Peterson J.D."/>
            <person name="Khouri H.M."/>
            <person name="Hance I."/>
            <person name="Chris Lee P."/>
            <person name="Holtzapple E.K."/>
            <person name="Scanlan D."/>
            <person name="Tran K."/>
            <person name="Moazzez A."/>
            <person name="Utterback T.R."/>
            <person name="Rizzo M."/>
            <person name="Lee K."/>
            <person name="Kosack D."/>
            <person name="Moestl D."/>
            <person name="Wedler H."/>
            <person name="Lauber J."/>
            <person name="Stjepandic D."/>
            <person name="Hoheisel J."/>
            <person name="Straetz M."/>
            <person name="Heim S."/>
            <person name="Kiewitz C."/>
            <person name="Eisen J.A."/>
            <person name="Timmis K.N."/>
            <person name="Duesterhoeft A."/>
            <person name="Tuemmler B."/>
            <person name="Fraser C.M."/>
        </authorList>
    </citation>
    <scope>NUCLEOTIDE SEQUENCE [LARGE SCALE GENOMIC DNA]</scope>
    <source>
        <strain>ATCC 47054 / DSM 6125 / CFBP 8728 / NCIMB 11950 / KT2440</strain>
    </source>
</reference>
<accession>Q88NW8</accession>
<sequence>MAERFRGYLPVVVDVETGGFNSATDALLEIAAVTIGMDEKGFLFPEHTYFHRVEPFEGANIEPAALEFTGIKLDHPLRMAVSEESAMTDIFRGVRKALKANGCKRAILVGHNSSFDLGFLNAAVARNDLKRNPFHPFSSFDTATLAGLAYGQTVLARACQSADIDFDGREAHSARYDTEKTAELFCGIVNRWKEMGGWRDFND</sequence>
<keyword id="KW-0269">Exonuclease</keyword>
<keyword id="KW-0378">Hydrolase</keyword>
<keyword id="KW-0460">Magnesium</keyword>
<keyword id="KW-0479">Metal-binding</keyword>
<keyword id="KW-0540">Nuclease</keyword>
<keyword id="KW-1185">Reference proteome</keyword>
<keyword id="KW-0819">tRNA processing</keyword>
<feature type="chain" id="PRO_0000208970" description="Ribonuclease T">
    <location>
        <begin position="1"/>
        <end position="203"/>
    </location>
</feature>
<feature type="domain" description="Exonuclease" evidence="1">
    <location>
        <begin position="11"/>
        <end position="185"/>
    </location>
</feature>
<feature type="active site" description="Proton donor/acceptor" evidence="1">
    <location>
        <position position="172"/>
    </location>
</feature>
<feature type="binding site" evidence="1">
    <location>
        <position position="14"/>
    </location>
    <ligand>
        <name>Mg(2+)</name>
        <dbReference type="ChEBI" id="CHEBI:18420"/>
        <label>1</label>
        <note>catalytic</note>
    </ligand>
</feature>
<feature type="binding site" evidence="1">
    <location>
        <position position="14"/>
    </location>
    <ligand>
        <name>Mg(2+)</name>
        <dbReference type="ChEBI" id="CHEBI:18420"/>
        <label>2</label>
        <note>catalytic</note>
    </ligand>
</feature>
<feature type="binding site" evidence="1">
    <location>
        <position position="16"/>
    </location>
    <ligand>
        <name>Mg(2+)</name>
        <dbReference type="ChEBI" id="CHEBI:18420"/>
        <label>2</label>
        <note>catalytic</note>
    </ligand>
</feature>
<feature type="binding site" evidence="1">
    <location>
        <position position="172"/>
    </location>
    <ligand>
        <name>Mg(2+)</name>
        <dbReference type="ChEBI" id="CHEBI:18420"/>
        <label>2</label>
        <note>catalytic</note>
    </ligand>
</feature>
<feature type="binding site" evidence="1">
    <location>
        <position position="177"/>
    </location>
    <ligand>
        <name>Mg(2+)</name>
        <dbReference type="ChEBI" id="CHEBI:18420"/>
        <label>2</label>
        <note>catalytic</note>
    </ligand>
</feature>
<feature type="site" description="Important for substrate binding and specificity" evidence="1">
    <location>
        <position position="20"/>
    </location>
</feature>
<feature type="site" description="Important for substrate binding and specificity" evidence="1">
    <location>
        <position position="68"/>
    </location>
</feature>
<feature type="site" description="Important for substrate binding and specificity" evidence="1">
    <location>
        <position position="115"/>
    </location>
</feature>
<feature type="site" description="Important for substrate binding and specificity" evidence="1">
    <location>
        <position position="137"/>
    </location>
</feature>
<proteinExistence type="inferred from homology"/>
<evidence type="ECO:0000255" key="1">
    <source>
        <dbReference type="HAMAP-Rule" id="MF_00157"/>
    </source>
</evidence>